<proteinExistence type="inferred from homology"/>
<reference key="1">
    <citation type="journal article" date="2002" name="Proc. Natl. Acad. Sci. U.S.A.">
        <title>The complete genome sequence of Chlorobium tepidum TLS, a photosynthetic, anaerobic, green-sulfur bacterium.</title>
        <authorList>
            <person name="Eisen J.A."/>
            <person name="Nelson K.E."/>
            <person name="Paulsen I.T."/>
            <person name="Heidelberg J.F."/>
            <person name="Wu M."/>
            <person name="Dodson R.J."/>
            <person name="DeBoy R.T."/>
            <person name="Gwinn M.L."/>
            <person name="Nelson W.C."/>
            <person name="Haft D.H."/>
            <person name="Hickey E.K."/>
            <person name="Peterson J.D."/>
            <person name="Durkin A.S."/>
            <person name="Kolonay J.F."/>
            <person name="Yang F."/>
            <person name="Holt I.E."/>
            <person name="Umayam L.A."/>
            <person name="Mason T.M."/>
            <person name="Brenner M."/>
            <person name="Shea T.P."/>
            <person name="Parksey D.S."/>
            <person name="Nierman W.C."/>
            <person name="Feldblyum T.V."/>
            <person name="Hansen C.L."/>
            <person name="Craven M.B."/>
            <person name="Radune D."/>
            <person name="Vamathevan J.J."/>
            <person name="Khouri H.M."/>
            <person name="White O."/>
            <person name="Gruber T.M."/>
            <person name="Ketchum K.A."/>
            <person name="Venter J.C."/>
            <person name="Tettelin H."/>
            <person name="Bryant D.A."/>
            <person name="Fraser C.M."/>
        </authorList>
    </citation>
    <scope>NUCLEOTIDE SEQUENCE [LARGE SCALE GENOMIC DNA]</scope>
    <source>
        <strain>ATCC 49652 / DSM 12025 / NBRC 103806 / TLS</strain>
    </source>
</reference>
<comment type="function">
    <text evidence="1">Catalyzes the reversible conversion of 2-phosphoglycerate (2-PG) into phosphoenolpyruvate (PEP). It is essential for the degradation of carbohydrates via glycolysis.</text>
</comment>
<comment type="catalytic activity">
    <reaction evidence="1">
        <text>(2R)-2-phosphoglycerate = phosphoenolpyruvate + H2O</text>
        <dbReference type="Rhea" id="RHEA:10164"/>
        <dbReference type="ChEBI" id="CHEBI:15377"/>
        <dbReference type="ChEBI" id="CHEBI:58289"/>
        <dbReference type="ChEBI" id="CHEBI:58702"/>
        <dbReference type="EC" id="4.2.1.11"/>
    </reaction>
</comment>
<comment type="cofactor">
    <cofactor evidence="1">
        <name>Mg(2+)</name>
        <dbReference type="ChEBI" id="CHEBI:18420"/>
    </cofactor>
    <text evidence="1">Binds a second Mg(2+) ion via substrate during catalysis.</text>
</comment>
<comment type="pathway">
    <text evidence="1">Carbohydrate degradation; glycolysis; pyruvate from D-glyceraldehyde 3-phosphate: step 4/5.</text>
</comment>
<comment type="subcellular location">
    <subcellularLocation>
        <location evidence="1">Cytoplasm</location>
    </subcellularLocation>
    <subcellularLocation>
        <location evidence="1">Secreted</location>
    </subcellularLocation>
    <subcellularLocation>
        <location evidence="1">Cell surface</location>
    </subcellularLocation>
    <text evidence="1">Fractions of enolase are present in both the cytoplasm and on the cell surface.</text>
</comment>
<comment type="similarity">
    <text evidence="1">Belongs to the enolase family.</text>
</comment>
<gene>
    <name evidence="1" type="primary">eno1</name>
    <name type="synonym">eno-1</name>
    <name type="ordered locus">CT1962</name>
</gene>
<sequence length="427" mass="46838">MKIQNVNAIEILDSRGNPTVEVNLKLEDGTISRAMVPSGASTGEREATELRDGDKKRYGGKGVLKAVENVNSAIAKAIENKHFTNQRELDYFLIELDETNNKSKLGANAILGVSMAFARAKAQSSRTPLYQYLGGSNAHIMPVPCMNVINGGKHADNTIDFQEFMIAPHNAPSFRESIRMGEEVFHALKAVLKLKGLSTGVGDEGGFAPDLKSNEQAVEMILEGITKAGYKPSVDVSICLDPASSEMWENGKYKFFKSTQKLVSSDEMVKLWESWVNQYPIVLLEDGMAENDWEGWKNLTDVIGNKIEIVGDDLFCTNKSILLNGINKGVANSILIKLNQIGTVTETLETIELAYKNSYNCFVSHRSGETVDSFIADLTVGINAGHLKSGSGCRGERIEKFNQLMRIENELGKSAQFAGLKAFKNAK</sequence>
<protein>
    <recommendedName>
        <fullName evidence="1">Enolase 1</fullName>
        <ecNumber evidence="1">4.2.1.11</ecNumber>
    </recommendedName>
    <alternativeName>
        <fullName evidence="1">2-phospho-D-glycerate hydro-lyase 1</fullName>
    </alternativeName>
    <alternativeName>
        <fullName evidence="1">2-phosphoglycerate dehydratase 1</fullName>
    </alternativeName>
</protein>
<evidence type="ECO:0000255" key="1">
    <source>
        <dbReference type="HAMAP-Rule" id="MF_00318"/>
    </source>
</evidence>
<feature type="chain" id="PRO_0000133868" description="Enolase 1">
    <location>
        <begin position="1"/>
        <end position="427"/>
    </location>
</feature>
<feature type="active site" description="Proton donor" evidence="1">
    <location>
        <position position="204"/>
    </location>
</feature>
<feature type="active site" description="Proton acceptor" evidence="1">
    <location>
        <position position="337"/>
    </location>
</feature>
<feature type="binding site" evidence="1">
    <location>
        <position position="162"/>
    </location>
    <ligand>
        <name>(2R)-2-phosphoglycerate</name>
        <dbReference type="ChEBI" id="CHEBI:58289"/>
    </ligand>
</feature>
<feature type="binding site" evidence="1">
    <location>
        <position position="241"/>
    </location>
    <ligand>
        <name>Mg(2+)</name>
        <dbReference type="ChEBI" id="CHEBI:18420"/>
    </ligand>
</feature>
<feature type="binding site" evidence="1">
    <location>
        <position position="285"/>
    </location>
    <ligand>
        <name>Mg(2+)</name>
        <dbReference type="ChEBI" id="CHEBI:18420"/>
    </ligand>
</feature>
<feature type="binding site" evidence="1">
    <location>
        <position position="312"/>
    </location>
    <ligand>
        <name>Mg(2+)</name>
        <dbReference type="ChEBI" id="CHEBI:18420"/>
    </ligand>
</feature>
<feature type="binding site" evidence="1">
    <location>
        <position position="337"/>
    </location>
    <ligand>
        <name>(2R)-2-phosphoglycerate</name>
        <dbReference type="ChEBI" id="CHEBI:58289"/>
    </ligand>
</feature>
<feature type="binding site" evidence="1">
    <location>
        <position position="366"/>
    </location>
    <ligand>
        <name>(2R)-2-phosphoglycerate</name>
        <dbReference type="ChEBI" id="CHEBI:58289"/>
    </ligand>
</feature>
<feature type="binding site" evidence="1">
    <location>
        <position position="367"/>
    </location>
    <ligand>
        <name>(2R)-2-phosphoglycerate</name>
        <dbReference type="ChEBI" id="CHEBI:58289"/>
    </ligand>
</feature>
<feature type="binding site" evidence="1">
    <location>
        <position position="388"/>
    </location>
    <ligand>
        <name>(2R)-2-phosphoglycerate</name>
        <dbReference type="ChEBI" id="CHEBI:58289"/>
    </ligand>
</feature>
<keyword id="KW-0963">Cytoplasm</keyword>
<keyword id="KW-0324">Glycolysis</keyword>
<keyword id="KW-0456">Lyase</keyword>
<keyword id="KW-0460">Magnesium</keyword>
<keyword id="KW-0479">Metal-binding</keyword>
<keyword id="KW-1185">Reference proteome</keyword>
<keyword id="KW-0964">Secreted</keyword>
<accession>Q8KB35</accession>
<organism>
    <name type="scientific">Chlorobaculum tepidum (strain ATCC 49652 / DSM 12025 / NBRC 103806 / TLS)</name>
    <name type="common">Chlorobium tepidum</name>
    <dbReference type="NCBI Taxonomy" id="194439"/>
    <lineage>
        <taxon>Bacteria</taxon>
        <taxon>Pseudomonadati</taxon>
        <taxon>Chlorobiota</taxon>
        <taxon>Chlorobiia</taxon>
        <taxon>Chlorobiales</taxon>
        <taxon>Chlorobiaceae</taxon>
        <taxon>Chlorobaculum</taxon>
    </lineage>
</organism>
<name>ENO1_CHLTE</name>
<dbReference type="EC" id="4.2.1.11" evidence="1"/>
<dbReference type="EMBL" id="AE006470">
    <property type="protein sequence ID" value="AAM73181.1"/>
    <property type="molecule type" value="Genomic_DNA"/>
</dbReference>
<dbReference type="RefSeq" id="NP_662839.1">
    <property type="nucleotide sequence ID" value="NC_002932.3"/>
</dbReference>
<dbReference type="RefSeq" id="WP_010933619.1">
    <property type="nucleotide sequence ID" value="NC_002932.3"/>
</dbReference>
<dbReference type="SMR" id="Q8KB35"/>
<dbReference type="STRING" id="194439.CT1962"/>
<dbReference type="EnsemblBacteria" id="AAM73181">
    <property type="protein sequence ID" value="AAM73181"/>
    <property type="gene ID" value="CT1962"/>
</dbReference>
<dbReference type="KEGG" id="cte:CT1962"/>
<dbReference type="PATRIC" id="fig|194439.7.peg.1777"/>
<dbReference type="eggNOG" id="COG0148">
    <property type="taxonomic scope" value="Bacteria"/>
</dbReference>
<dbReference type="HOGENOM" id="CLU_031223_2_1_10"/>
<dbReference type="OrthoDB" id="9804716at2"/>
<dbReference type="UniPathway" id="UPA00109">
    <property type="reaction ID" value="UER00187"/>
</dbReference>
<dbReference type="Proteomes" id="UP000001007">
    <property type="component" value="Chromosome"/>
</dbReference>
<dbReference type="GO" id="GO:0009986">
    <property type="term" value="C:cell surface"/>
    <property type="evidence" value="ECO:0007669"/>
    <property type="project" value="UniProtKB-SubCell"/>
</dbReference>
<dbReference type="GO" id="GO:0005576">
    <property type="term" value="C:extracellular region"/>
    <property type="evidence" value="ECO:0007669"/>
    <property type="project" value="UniProtKB-SubCell"/>
</dbReference>
<dbReference type="GO" id="GO:0000015">
    <property type="term" value="C:phosphopyruvate hydratase complex"/>
    <property type="evidence" value="ECO:0007669"/>
    <property type="project" value="InterPro"/>
</dbReference>
<dbReference type="GO" id="GO:0000287">
    <property type="term" value="F:magnesium ion binding"/>
    <property type="evidence" value="ECO:0007669"/>
    <property type="project" value="UniProtKB-UniRule"/>
</dbReference>
<dbReference type="GO" id="GO:0004634">
    <property type="term" value="F:phosphopyruvate hydratase activity"/>
    <property type="evidence" value="ECO:0007669"/>
    <property type="project" value="UniProtKB-UniRule"/>
</dbReference>
<dbReference type="GO" id="GO:0006096">
    <property type="term" value="P:glycolytic process"/>
    <property type="evidence" value="ECO:0007669"/>
    <property type="project" value="UniProtKB-UniRule"/>
</dbReference>
<dbReference type="CDD" id="cd03313">
    <property type="entry name" value="enolase"/>
    <property type="match status" value="1"/>
</dbReference>
<dbReference type="FunFam" id="3.30.390.10:FF:000001">
    <property type="entry name" value="Enolase"/>
    <property type="match status" value="1"/>
</dbReference>
<dbReference type="Gene3D" id="3.20.20.120">
    <property type="entry name" value="Enolase-like C-terminal domain"/>
    <property type="match status" value="1"/>
</dbReference>
<dbReference type="Gene3D" id="3.30.390.10">
    <property type="entry name" value="Enolase-like, N-terminal domain"/>
    <property type="match status" value="1"/>
</dbReference>
<dbReference type="HAMAP" id="MF_00318">
    <property type="entry name" value="Enolase"/>
    <property type="match status" value="1"/>
</dbReference>
<dbReference type="InterPro" id="IPR000941">
    <property type="entry name" value="Enolase"/>
</dbReference>
<dbReference type="InterPro" id="IPR036849">
    <property type="entry name" value="Enolase-like_C_sf"/>
</dbReference>
<dbReference type="InterPro" id="IPR029017">
    <property type="entry name" value="Enolase-like_N"/>
</dbReference>
<dbReference type="InterPro" id="IPR020810">
    <property type="entry name" value="Enolase_C"/>
</dbReference>
<dbReference type="InterPro" id="IPR020809">
    <property type="entry name" value="Enolase_CS"/>
</dbReference>
<dbReference type="InterPro" id="IPR020811">
    <property type="entry name" value="Enolase_N"/>
</dbReference>
<dbReference type="NCBIfam" id="TIGR01060">
    <property type="entry name" value="eno"/>
    <property type="match status" value="1"/>
</dbReference>
<dbReference type="PANTHER" id="PTHR11902">
    <property type="entry name" value="ENOLASE"/>
    <property type="match status" value="1"/>
</dbReference>
<dbReference type="PANTHER" id="PTHR11902:SF1">
    <property type="entry name" value="ENOLASE"/>
    <property type="match status" value="1"/>
</dbReference>
<dbReference type="Pfam" id="PF00113">
    <property type="entry name" value="Enolase_C"/>
    <property type="match status" value="1"/>
</dbReference>
<dbReference type="Pfam" id="PF03952">
    <property type="entry name" value="Enolase_N"/>
    <property type="match status" value="1"/>
</dbReference>
<dbReference type="PIRSF" id="PIRSF001400">
    <property type="entry name" value="Enolase"/>
    <property type="match status" value="1"/>
</dbReference>
<dbReference type="PRINTS" id="PR00148">
    <property type="entry name" value="ENOLASE"/>
</dbReference>
<dbReference type="SFLD" id="SFLDS00001">
    <property type="entry name" value="Enolase"/>
    <property type="match status" value="1"/>
</dbReference>
<dbReference type="SFLD" id="SFLDF00002">
    <property type="entry name" value="enolase"/>
    <property type="match status" value="1"/>
</dbReference>
<dbReference type="SMART" id="SM01192">
    <property type="entry name" value="Enolase_C"/>
    <property type="match status" value="1"/>
</dbReference>
<dbReference type="SMART" id="SM01193">
    <property type="entry name" value="Enolase_N"/>
    <property type="match status" value="1"/>
</dbReference>
<dbReference type="SUPFAM" id="SSF51604">
    <property type="entry name" value="Enolase C-terminal domain-like"/>
    <property type="match status" value="1"/>
</dbReference>
<dbReference type="SUPFAM" id="SSF54826">
    <property type="entry name" value="Enolase N-terminal domain-like"/>
    <property type="match status" value="1"/>
</dbReference>
<dbReference type="PROSITE" id="PS00164">
    <property type="entry name" value="ENOLASE"/>
    <property type="match status" value="1"/>
</dbReference>